<keyword id="KW-0067">ATP-binding</keyword>
<keyword id="KW-0963">Cytoplasm</keyword>
<keyword id="KW-0418">Kinase</keyword>
<keyword id="KW-0520">NAD</keyword>
<keyword id="KW-0521">NADP</keyword>
<keyword id="KW-0547">Nucleotide-binding</keyword>
<keyword id="KW-1185">Reference proteome</keyword>
<keyword id="KW-0808">Transferase</keyword>
<protein>
    <recommendedName>
        <fullName evidence="1">NAD kinase</fullName>
        <ecNumber evidence="1">2.7.1.23</ecNumber>
    </recommendedName>
    <alternativeName>
        <fullName evidence="1">ATP-dependent NAD kinase</fullName>
    </alternativeName>
</protein>
<organism>
    <name type="scientific">Corynebacterium glutamicum (strain ATCC 13032 / DSM 20300 / JCM 1318 / BCRC 11384 / CCUG 27702 / LMG 3730 / NBRC 12168 / NCIMB 10025 / NRRL B-2784 / 534)</name>
    <dbReference type="NCBI Taxonomy" id="196627"/>
    <lineage>
        <taxon>Bacteria</taxon>
        <taxon>Bacillati</taxon>
        <taxon>Actinomycetota</taxon>
        <taxon>Actinomycetes</taxon>
        <taxon>Mycobacteriales</taxon>
        <taxon>Corynebacteriaceae</taxon>
        <taxon>Corynebacterium</taxon>
    </lineage>
</organism>
<comment type="function">
    <text evidence="1">Involved in the regulation of the intracellular balance of NAD and NADP, and is a key enzyme in the biosynthesis of NADP. Catalyzes specifically the phosphorylation on 2'-hydroxyl of the adenosine moiety of NAD to yield NADP.</text>
</comment>
<comment type="catalytic activity">
    <reaction evidence="1">
        <text>NAD(+) + ATP = ADP + NADP(+) + H(+)</text>
        <dbReference type="Rhea" id="RHEA:18629"/>
        <dbReference type="ChEBI" id="CHEBI:15378"/>
        <dbReference type="ChEBI" id="CHEBI:30616"/>
        <dbReference type="ChEBI" id="CHEBI:57540"/>
        <dbReference type="ChEBI" id="CHEBI:58349"/>
        <dbReference type="ChEBI" id="CHEBI:456216"/>
        <dbReference type="EC" id="2.7.1.23"/>
    </reaction>
</comment>
<comment type="cofactor">
    <cofactor evidence="1">
        <name>a divalent metal cation</name>
        <dbReference type="ChEBI" id="CHEBI:60240"/>
    </cofactor>
</comment>
<comment type="subcellular location">
    <subcellularLocation>
        <location evidence="1">Cytoplasm</location>
    </subcellularLocation>
</comment>
<comment type="similarity">
    <text evidence="1">Belongs to the NAD kinase family.</text>
</comment>
<comment type="sequence caution" evidence="2">
    <conflict type="erroneous initiation">
        <sequence resource="EMBL-CDS" id="CAF21423"/>
    </conflict>
    <text>Extended N-terminus.</text>
</comment>
<gene>
    <name evidence="1" type="primary">nadK</name>
    <name type="ordered locus">Cgl1413</name>
    <name type="ordered locus">cg1601</name>
</gene>
<accession>Q8NQM1</accession>
<feature type="chain" id="PRO_0000120614" description="NAD kinase">
    <location>
        <begin position="1"/>
        <end position="291"/>
    </location>
</feature>
<feature type="active site" description="Proton acceptor" evidence="1">
    <location>
        <position position="55"/>
    </location>
</feature>
<feature type="binding site" evidence="1">
    <location>
        <begin position="55"/>
        <end position="56"/>
    </location>
    <ligand>
        <name>NAD(+)</name>
        <dbReference type="ChEBI" id="CHEBI:57540"/>
    </ligand>
</feature>
<feature type="binding site" evidence="1">
    <location>
        <position position="60"/>
    </location>
    <ligand>
        <name>NAD(+)</name>
        <dbReference type="ChEBI" id="CHEBI:57540"/>
    </ligand>
</feature>
<feature type="binding site" evidence="1">
    <location>
        <begin position="130"/>
        <end position="131"/>
    </location>
    <ligand>
        <name>NAD(+)</name>
        <dbReference type="ChEBI" id="CHEBI:57540"/>
    </ligand>
</feature>
<feature type="binding site" evidence="1">
    <location>
        <position position="160"/>
    </location>
    <ligand>
        <name>NAD(+)</name>
        <dbReference type="ChEBI" id="CHEBI:57540"/>
    </ligand>
</feature>
<feature type="binding site" evidence="1">
    <location>
        <begin position="171"/>
        <end position="176"/>
    </location>
    <ligand>
        <name>NAD(+)</name>
        <dbReference type="ChEBI" id="CHEBI:57540"/>
    </ligand>
</feature>
<sequence length="291" mass="31155">MAAKLLDDAGIDVRVLINDADDPIAEHSVLGRFTHVRHAADAADGAELVLVLGGDGTFLRAADMAHAVDLPVLGINLGHVGFLAEWESDSLEEALKRVIDRDYRIEDRMTLTVVVLDGGGEEIGRGWALNEVSIENLNRRGVLDATLEVDARPVASFGCDGVLISTPTGSTAYAFSAGGPVLWPELDAILVVPNNAHALFTKPLVVSPKSTVAVESNSDTSAAMAVMDGFRPIPMPPGSRVEVTRGERPVRWVRLDSSPFTDRLVSKLRLPVTGWRGPQKQAENKDPRSAG</sequence>
<reference key="1">
    <citation type="journal article" date="2003" name="Appl. Microbiol. Biotechnol.">
        <title>The Corynebacterium glutamicum genome: features and impacts on biotechnological processes.</title>
        <authorList>
            <person name="Ikeda M."/>
            <person name="Nakagawa S."/>
        </authorList>
    </citation>
    <scope>NUCLEOTIDE SEQUENCE [LARGE SCALE GENOMIC DNA]</scope>
    <source>
        <strain>ATCC 13032 / DSM 20300 / JCM 1318 / BCRC 11384 / CCUG 27702 / LMG 3730 / NBRC 12168 / NCIMB 10025 / NRRL B-2784 / 534</strain>
    </source>
</reference>
<reference key="2">
    <citation type="journal article" date="2003" name="J. Biotechnol.">
        <title>The complete Corynebacterium glutamicum ATCC 13032 genome sequence and its impact on the production of L-aspartate-derived amino acids and vitamins.</title>
        <authorList>
            <person name="Kalinowski J."/>
            <person name="Bathe B."/>
            <person name="Bartels D."/>
            <person name="Bischoff N."/>
            <person name="Bott M."/>
            <person name="Burkovski A."/>
            <person name="Dusch N."/>
            <person name="Eggeling L."/>
            <person name="Eikmanns B.J."/>
            <person name="Gaigalat L."/>
            <person name="Goesmann A."/>
            <person name="Hartmann M."/>
            <person name="Huthmacher K."/>
            <person name="Kraemer R."/>
            <person name="Linke B."/>
            <person name="McHardy A.C."/>
            <person name="Meyer F."/>
            <person name="Moeckel B."/>
            <person name="Pfefferle W."/>
            <person name="Puehler A."/>
            <person name="Rey D.A."/>
            <person name="Rueckert C."/>
            <person name="Rupp O."/>
            <person name="Sahm H."/>
            <person name="Wendisch V.F."/>
            <person name="Wiegraebe I."/>
            <person name="Tauch A."/>
        </authorList>
    </citation>
    <scope>NUCLEOTIDE SEQUENCE [LARGE SCALE GENOMIC DNA]</scope>
    <source>
        <strain>ATCC 13032 / DSM 20300 / JCM 1318 / BCRC 11384 / CCUG 27702 / LMG 3730 / NBRC 12168 / NCIMB 10025 / NRRL B-2784 / 534</strain>
    </source>
</reference>
<evidence type="ECO:0000255" key="1">
    <source>
        <dbReference type="HAMAP-Rule" id="MF_00361"/>
    </source>
</evidence>
<evidence type="ECO:0000305" key="2"/>
<name>NADK_CORGL</name>
<proteinExistence type="inferred from homology"/>
<dbReference type="EC" id="2.7.1.23" evidence="1"/>
<dbReference type="EMBL" id="BA000036">
    <property type="protein sequence ID" value="BAB98806.1"/>
    <property type="molecule type" value="Genomic_DNA"/>
</dbReference>
<dbReference type="EMBL" id="BX927152">
    <property type="protein sequence ID" value="CAF21423.1"/>
    <property type="status" value="ALT_INIT"/>
    <property type="molecule type" value="Genomic_DNA"/>
</dbReference>
<dbReference type="RefSeq" id="NP_600631.1">
    <property type="nucleotide sequence ID" value="NC_003450.3"/>
</dbReference>
<dbReference type="SMR" id="Q8NQM1"/>
<dbReference type="STRING" id="196627.cg1601"/>
<dbReference type="KEGG" id="cgb:cg1601"/>
<dbReference type="KEGG" id="cgl:Cgl1413"/>
<dbReference type="PATRIC" id="fig|196627.13.peg.1381"/>
<dbReference type="eggNOG" id="COG0061">
    <property type="taxonomic scope" value="Bacteria"/>
</dbReference>
<dbReference type="HOGENOM" id="CLU_008831_0_0_11"/>
<dbReference type="OrthoDB" id="9774737at2"/>
<dbReference type="BioCyc" id="CORYNE:G18NG-10995-MONOMER"/>
<dbReference type="Proteomes" id="UP000000582">
    <property type="component" value="Chromosome"/>
</dbReference>
<dbReference type="Proteomes" id="UP000001009">
    <property type="component" value="Chromosome"/>
</dbReference>
<dbReference type="GO" id="GO:0005737">
    <property type="term" value="C:cytoplasm"/>
    <property type="evidence" value="ECO:0007669"/>
    <property type="project" value="UniProtKB-SubCell"/>
</dbReference>
<dbReference type="GO" id="GO:0005524">
    <property type="term" value="F:ATP binding"/>
    <property type="evidence" value="ECO:0007669"/>
    <property type="project" value="UniProtKB-KW"/>
</dbReference>
<dbReference type="GO" id="GO:0046872">
    <property type="term" value="F:metal ion binding"/>
    <property type="evidence" value="ECO:0007669"/>
    <property type="project" value="UniProtKB-UniRule"/>
</dbReference>
<dbReference type="GO" id="GO:0051287">
    <property type="term" value="F:NAD binding"/>
    <property type="evidence" value="ECO:0007669"/>
    <property type="project" value="UniProtKB-ARBA"/>
</dbReference>
<dbReference type="GO" id="GO:0003951">
    <property type="term" value="F:NAD+ kinase activity"/>
    <property type="evidence" value="ECO:0007669"/>
    <property type="project" value="UniProtKB-UniRule"/>
</dbReference>
<dbReference type="GO" id="GO:0019674">
    <property type="term" value="P:NAD metabolic process"/>
    <property type="evidence" value="ECO:0007669"/>
    <property type="project" value="InterPro"/>
</dbReference>
<dbReference type="GO" id="GO:0006741">
    <property type="term" value="P:NADP biosynthetic process"/>
    <property type="evidence" value="ECO:0007669"/>
    <property type="project" value="UniProtKB-UniRule"/>
</dbReference>
<dbReference type="FunFam" id="2.60.200.30:FF:000007">
    <property type="entry name" value="NAD kinase"/>
    <property type="match status" value="1"/>
</dbReference>
<dbReference type="Gene3D" id="3.40.50.10330">
    <property type="entry name" value="Probable inorganic polyphosphate/atp-NAD kinase, domain 1"/>
    <property type="match status" value="1"/>
</dbReference>
<dbReference type="Gene3D" id="2.60.200.30">
    <property type="entry name" value="Probable inorganic polyphosphate/atp-NAD kinase, domain 2"/>
    <property type="match status" value="1"/>
</dbReference>
<dbReference type="HAMAP" id="MF_00361">
    <property type="entry name" value="NAD_kinase"/>
    <property type="match status" value="1"/>
</dbReference>
<dbReference type="InterPro" id="IPR017438">
    <property type="entry name" value="ATP-NAD_kinase_N"/>
</dbReference>
<dbReference type="InterPro" id="IPR017437">
    <property type="entry name" value="ATP-NAD_kinase_PpnK-typ_C"/>
</dbReference>
<dbReference type="InterPro" id="IPR016064">
    <property type="entry name" value="NAD/diacylglycerol_kinase_sf"/>
</dbReference>
<dbReference type="InterPro" id="IPR002504">
    <property type="entry name" value="NADK"/>
</dbReference>
<dbReference type="NCBIfam" id="NF002892">
    <property type="entry name" value="PRK03372.1"/>
    <property type="match status" value="1"/>
</dbReference>
<dbReference type="PANTHER" id="PTHR20275">
    <property type="entry name" value="NAD KINASE"/>
    <property type="match status" value="1"/>
</dbReference>
<dbReference type="PANTHER" id="PTHR20275:SF0">
    <property type="entry name" value="NAD KINASE"/>
    <property type="match status" value="1"/>
</dbReference>
<dbReference type="Pfam" id="PF01513">
    <property type="entry name" value="NAD_kinase"/>
    <property type="match status" value="1"/>
</dbReference>
<dbReference type="Pfam" id="PF20143">
    <property type="entry name" value="NAD_kinase_C"/>
    <property type="match status" value="1"/>
</dbReference>
<dbReference type="SUPFAM" id="SSF111331">
    <property type="entry name" value="NAD kinase/diacylglycerol kinase-like"/>
    <property type="match status" value="1"/>
</dbReference>